<protein>
    <recommendedName>
        <fullName>Probable cation efflux system protein MT2084</fullName>
    </recommendedName>
</protein>
<feature type="chain" id="PRO_0000428371" description="Probable cation efflux system protein MT2084">
    <location>
        <begin position="1"/>
        <end position="332"/>
    </location>
</feature>
<feature type="transmembrane region" description="Helical" evidence="1">
    <location>
        <begin position="46"/>
        <end position="66"/>
    </location>
</feature>
<feature type="transmembrane region" description="Helical" evidence="1">
    <location>
        <begin position="75"/>
        <end position="95"/>
    </location>
</feature>
<feature type="transmembrane region" description="Helical" evidence="1">
    <location>
        <begin position="113"/>
        <end position="133"/>
    </location>
</feature>
<feature type="transmembrane region" description="Helical" evidence="1">
    <location>
        <begin position="145"/>
        <end position="165"/>
    </location>
</feature>
<feature type="transmembrane region" description="Helical" evidence="1">
    <location>
        <begin position="202"/>
        <end position="222"/>
    </location>
</feature>
<reference key="1">
    <citation type="journal article" date="2002" name="J. Bacteriol.">
        <title>Whole-genome comparison of Mycobacterium tuberculosis clinical and laboratory strains.</title>
        <authorList>
            <person name="Fleischmann R.D."/>
            <person name="Alland D."/>
            <person name="Eisen J.A."/>
            <person name="Carpenter L."/>
            <person name="White O."/>
            <person name="Peterson J.D."/>
            <person name="DeBoy R.T."/>
            <person name="Dodson R.J."/>
            <person name="Gwinn M.L."/>
            <person name="Haft D.H."/>
            <person name="Hickey E.K."/>
            <person name="Kolonay J.F."/>
            <person name="Nelson W.C."/>
            <person name="Umayam L.A."/>
            <person name="Ermolaeva M.D."/>
            <person name="Salzberg S.L."/>
            <person name="Delcher A."/>
            <person name="Utterback T.R."/>
            <person name="Weidman J.F."/>
            <person name="Khouri H.M."/>
            <person name="Gill J."/>
            <person name="Mikula A."/>
            <person name="Bishai W."/>
            <person name="Jacobs W.R. Jr."/>
            <person name="Venter J.C."/>
            <person name="Fraser C.M."/>
        </authorList>
    </citation>
    <scope>NUCLEOTIDE SEQUENCE [LARGE SCALE GENOMIC DNA]</scope>
    <source>
        <strain>CDC 1551 / Oshkosh</strain>
    </source>
</reference>
<evidence type="ECO:0000255" key="1"/>
<evidence type="ECO:0000305" key="2"/>
<proteinExistence type="inferred from homology"/>
<accession>P9WGF4</accession>
<accession>F2GG63</accession>
<accession>L0T8K1</accession>
<accession>O53471</accession>
<accession>Q7D7L8</accession>
<organism>
    <name type="scientific">Mycobacterium tuberculosis (strain CDC 1551 / Oshkosh)</name>
    <dbReference type="NCBI Taxonomy" id="83331"/>
    <lineage>
        <taxon>Bacteria</taxon>
        <taxon>Bacillati</taxon>
        <taxon>Actinomycetota</taxon>
        <taxon>Actinomycetes</taxon>
        <taxon>Mycobacteriales</taxon>
        <taxon>Mycobacteriaceae</taxon>
        <taxon>Mycobacterium</taxon>
        <taxon>Mycobacterium tuberculosis complex</taxon>
    </lineage>
</organism>
<name>Y2025_MYCTO</name>
<keyword id="KW-1003">Cell membrane</keyword>
<keyword id="KW-0406">Ion transport</keyword>
<keyword id="KW-0472">Membrane</keyword>
<keyword id="KW-1185">Reference proteome</keyword>
<keyword id="KW-0812">Transmembrane</keyword>
<keyword id="KW-1133">Transmembrane helix</keyword>
<keyword id="KW-0813">Transport</keyword>
<sequence>MTHDHAHSRGVPAMIKEIFAPHSHDAADSVDDTLESTAAGIRTVKISLLVLGLTALIQIVIVVMSGSVALAADTIHNFADALTAVPLWIAFALGAKPATRRYTYGFGRVEDLAGSFVVAMITMSAIIAGYEAIARLIHPQQIEHVGWVALAGLVGFIGNEWVALYRIRVGHRIGSAALIADGLHARTDGFTSLAVLCSAGGVALGFPLADPIVGLLITAAILAVLRTAARDVFRRLLDGVDPAMVDAAEQALAARPGVQAVRSVRMRWIGHRLHADAELDVDPALDLAQAHRIAHDAEHELTHTVPKLTTALIHAYPAEHGSSIPDRGRTVE</sequence>
<dbReference type="EMBL" id="AE000516">
    <property type="protein sequence ID" value="AAK46363.1"/>
    <property type="molecule type" value="Genomic_DNA"/>
</dbReference>
<dbReference type="PIR" id="H70941">
    <property type="entry name" value="H70941"/>
</dbReference>
<dbReference type="RefSeq" id="WP_003410146.1">
    <property type="nucleotide sequence ID" value="NZ_KK341227.1"/>
</dbReference>
<dbReference type="SMR" id="P9WGF4"/>
<dbReference type="KEGG" id="mtc:MT2084"/>
<dbReference type="PATRIC" id="fig|83331.31.peg.2248"/>
<dbReference type="HOGENOM" id="CLU_013430_3_1_11"/>
<dbReference type="Proteomes" id="UP000001020">
    <property type="component" value="Chromosome"/>
</dbReference>
<dbReference type="GO" id="GO:0005886">
    <property type="term" value="C:plasma membrane"/>
    <property type="evidence" value="ECO:0007669"/>
    <property type="project" value="UniProtKB-SubCell"/>
</dbReference>
<dbReference type="GO" id="GO:0015086">
    <property type="term" value="F:cadmium ion transmembrane transporter activity"/>
    <property type="evidence" value="ECO:0007669"/>
    <property type="project" value="TreeGrafter"/>
</dbReference>
<dbReference type="GO" id="GO:0015093">
    <property type="term" value="F:ferrous iron transmembrane transporter activity"/>
    <property type="evidence" value="ECO:0007669"/>
    <property type="project" value="TreeGrafter"/>
</dbReference>
<dbReference type="GO" id="GO:0015341">
    <property type="term" value="F:zinc efflux antiporter activity"/>
    <property type="evidence" value="ECO:0007669"/>
    <property type="project" value="TreeGrafter"/>
</dbReference>
<dbReference type="GO" id="GO:0006882">
    <property type="term" value="P:intracellular zinc ion homeostasis"/>
    <property type="evidence" value="ECO:0007669"/>
    <property type="project" value="TreeGrafter"/>
</dbReference>
<dbReference type="FunFam" id="3.30.70.1350:FF:000014">
    <property type="entry name" value="Cation efflux system protein"/>
    <property type="match status" value="1"/>
</dbReference>
<dbReference type="FunFam" id="1.20.1510.10:FF:000006">
    <property type="entry name" value="Divalent cation efflux transporter"/>
    <property type="match status" value="1"/>
</dbReference>
<dbReference type="Gene3D" id="1.20.1510.10">
    <property type="entry name" value="Cation efflux protein transmembrane domain"/>
    <property type="match status" value="1"/>
</dbReference>
<dbReference type="Gene3D" id="3.30.70.1350">
    <property type="entry name" value="Cation efflux protein, cytoplasmic domain"/>
    <property type="match status" value="1"/>
</dbReference>
<dbReference type="InterPro" id="IPR002524">
    <property type="entry name" value="Cation_efflux"/>
</dbReference>
<dbReference type="InterPro" id="IPR027470">
    <property type="entry name" value="Cation_efflux_CTD"/>
</dbReference>
<dbReference type="InterPro" id="IPR036837">
    <property type="entry name" value="Cation_efflux_CTD_sf"/>
</dbReference>
<dbReference type="InterPro" id="IPR027469">
    <property type="entry name" value="Cation_efflux_TMD_sf"/>
</dbReference>
<dbReference type="InterPro" id="IPR050291">
    <property type="entry name" value="CDF_Transporter"/>
</dbReference>
<dbReference type="NCBIfam" id="TIGR01297">
    <property type="entry name" value="CDF"/>
    <property type="match status" value="1"/>
</dbReference>
<dbReference type="PANTHER" id="PTHR43840">
    <property type="entry name" value="MITOCHONDRIAL METAL TRANSPORTER 1-RELATED"/>
    <property type="match status" value="1"/>
</dbReference>
<dbReference type="PANTHER" id="PTHR43840:SF15">
    <property type="entry name" value="MITOCHONDRIAL METAL TRANSPORTER 1-RELATED"/>
    <property type="match status" value="1"/>
</dbReference>
<dbReference type="Pfam" id="PF01545">
    <property type="entry name" value="Cation_efflux"/>
    <property type="match status" value="1"/>
</dbReference>
<dbReference type="Pfam" id="PF16916">
    <property type="entry name" value="ZT_dimer"/>
    <property type="match status" value="1"/>
</dbReference>
<dbReference type="SUPFAM" id="SSF160240">
    <property type="entry name" value="Cation efflux protein cytoplasmic domain-like"/>
    <property type="match status" value="1"/>
</dbReference>
<dbReference type="SUPFAM" id="SSF161111">
    <property type="entry name" value="Cation efflux protein transmembrane domain-like"/>
    <property type="match status" value="1"/>
</dbReference>
<gene>
    <name type="ordered locus">MT2084</name>
</gene>
<comment type="subcellular location">
    <subcellularLocation>
        <location evidence="2">Cell membrane</location>
        <topology evidence="2">Multi-pass membrane protein</topology>
    </subcellularLocation>
</comment>
<comment type="similarity">
    <text evidence="2">Belongs to the cation diffusion facilitator (CDF) transporter (TC 2.A.4) family.</text>
</comment>